<comment type="catalytic activity">
    <reaction evidence="1">
        <text>tRNA(Leu) + L-leucine + ATP = L-leucyl-tRNA(Leu) + AMP + diphosphate</text>
        <dbReference type="Rhea" id="RHEA:11688"/>
        <dbReference type="Rhea" id="RHEA-COMP:9613"/>
        <dbReference type="Rhea" id="RHEA-COMP:9622"/>
        <dbReference type="ChEBI" id="CHEBI:30616"/>
        <dbReference type="ChEBI" id="CHEBI:33019"/>
        <dbReference type="ChEBI" id="CHEBI:57427"/>
        <dbReference type="ChEBI" id="CHEBI:78442"/>
        <dbReference type="ChEBI" id="CHEBI:78494"/>
        <dbReference type="ChEBI" id="CHEBI:456215"/>
        <dbReference type="EC" id="6.1.1.4"/>
    </reaction>
</comment>
<comment type="subcellular location">
    <subcellularLocation>
        <location evidence="1">Cytoplasm</location>
    </subcellularLocation>
</comment>
<comment type="similarity">
    <text evidence="1">Belongs to the class-I aminoacyl-tRNA synthetase family.</text>
</comment>
<evidence type="ECO:0000255" key="1">
    <source>
        <dbReference type="HAMAP-Rule" id="MF_00049"/>
    </source>
</evidence>
<sequence length="952" mass="106747">MTNPSEGTTPLAFRYTPELANKIEGEWQNYWTDNGTFNAPNPVGDLAPADGKALPEDKLFVQDMFPYPSGAGLHVGHPLGYIATDVFARYNRMLGKNVLHTLGYDAFGLPAEQYAIQTGTHPRTTTMANIENMKRQLGALGLGHDSRRAVATTDPEFYKWTQWIFLQIFNSWFDAEQQKARPISELIPLLESGELKTKDGADYNALGDVEKQKAVDDYRLVYRSNSTVNWCPGLGTVLANEEVTADGRSERGNFPVFRKNLSQWMMRITAYSDRLIDDLELLDWTEKVKSMQRNWIGRSRGAEVDFSAEGETVTVFTTRPDTLFGATYMVLAPEHELVDVLLEKAGSYEGVDARWTNGQASPAEAVAAYRASIAAKSDLERQENKEKTGVFLGVYATNPVNGDQIPVFIADYVLTGYGTGAIMAVPAHDERDYEFATVLGLPIKEVVAGGNIEEAAFTESGEAVNSANDNGLDINGLAKDEAVAKTIEWLEEKELGRGTIQYKLRDWLFARQRYWGEPFPIVYDENGQAHALPDSMLPVELPEVEDYKPVSFDPEDADSEPSPPLAKAREWVEVELDLGDGKKKYTRDTNVMPQWAGSSWYQLRYVDPSNDEQFCNIENERYWTGPRPETHGPNDPGGVDLYVGGVEHAVLHLLYARFWHKVLFDLGHVSSKEPYRRLYNQGYIQAFAYTDSRGVYVPADDVEEKDGKFFYQGEEVNQEYGKMGKSLKNAVAPDDICNNFGADTLRVYEMAMGPLDTSRPWATKDVVGAQRFLQRLWRLVVDENTGEVLTRDEVLTDDDNKQLHRTIAGVRDDYTNLRVNTVVAKLIEYVNYLTKTYPDTIPAGAVLPLIVMVSPVAPHIAEELWKKLGHDDTVTYEPFPTFEEKWLTDDEIELPVQVNGKVRGRITVAADASQEQVIEAALADEKVQEQISGKNLIKQIVVPGRMVNLVVK</sequence>
<gene>
    <name evidence="1" type="primary">leuS</name>
    <name type="ordered locus">cgR_2905</name>
</gene>
<organism>
    <name type="scientific">Corynebacterium glutamicum (strain R)</name>
    <dbReference type="NCBI Taxonomy" id="340322"/>
    <lineage>
        <taxon>Bacteria</taxon>
        <taxon>Bacillati</taxon>
        <taxon>Actinomycetota</taxon>
        <taxon>Actinomycetes</taxon>
        <taxon>Mycobacteriales</taxon>
        <taxon>Corynebacteriaceae</taxon>
        <taxon>Corynebacterium</taxon>
    </lineage>
</organism>
<protein>
    <recommendedName>
        <fullName evidence="1">Leucine--tRNA ligase</fullName>
        <ecNumber evidence="1">6.1.1.4</ecNumber>
    </recommendedName>
    <alternativeName>
        <fullName evidence="1">Leucyl-tRNA synthetase</fullName>
        <shortName evidence="1">LeuRS</shortName>
    </alternativeName>
</protein>
<dbReference type="EC" id="6.1.1.4" evidence="1"/>
<dbReference type="EMBL" id="AP009044">
    <property type="protein sequence ID" value="BAF55925.1"/>
    <property type="molecule type" value="Genomic_DNA"/>
</dbReference>
<dbReference type="RefSeq" id="WP_006286817.1">
    <property type="nucleotide sequence ID" value="NC_009342.1"/>
</dbReference>
<dbReference type="SMR" id="A4QI59"/>
<dbReference type="KEGG" id="cgt:cgR_2905"/>
<dbReference type="HOGENOM" id="CLU_004427_0_0_11"/>
<dbReference type="PhylomeDB" id="A4QI59"/>
<dbReference type="Proteomes" id="UP000006698">
    <property type="component" value="Chromosome"/>
</dbReference>
<dbReference type="GO" id="GO:0005829">
    <property type="term" value="C:cytosol"/>
    <property type="evidence" value="ECO:0007669"/>
    <property type="project" value="TreeGrafter"/>
</dbReference>
<dbReference type="GO" id="GO:0002161">
    <property type="term" value="F:aminoacyl-tRNA deacylase activity"/>
    <property type="evidence" value="ECO:0007669"/>
    <property type="project" value="InterPro"/>
</dbReference>
<dbReference type="GO" id="GO:0005524">
    <property type="term" value="F:ATP binding"/>
    <property type="evidence" value="ECO:0007669"/>
    <property type="project" value="UniProtKB-UniRule"/>
</dbReference>
<dbReference type="GO" id="GO:0004823">
    <property type="term" value="F:leucine-tRNA ligase activity"/>
    <property type="evidence" value="ECO:0007669"/>
    <property type="project" value="UniProtKB-UniRule"/>
</dbReference>
<dbReference type="GO" id="GO:0006429">
    <property type="term" value="P:leucyl-tRNA aminoacylation"/>
    <property type="evidence" value="ECO:0007669"/>
    <property type="project" value="UniProtKB-UniRule"/>
</dbReference>
<dbReference type="CDD" id="cd07958">
    <property type="entry name" value="Anticodon_Ia_Leu_BEm"/>
    <property type="match status" value="1"/>
</dbReference>
<dbReference type="FunFam" id="3.40.50.620:FF:000056">
    <property type="entry name" value="Leucine--tRNA ligase"/>
    <property type="match status" value="1"/>
</dbReference>
<dbReference type="FunFam" id="3.40.50.620:FF:000060">
    <property type="entry name" value="Leucine--tRNA ligase"/>
    <property type="match status" value="1"/>
</dbReference>
<dbReference type="FunFam" id="3.40.50.620:FF:000087">
    <property type="entry name" value="Leucine--tRNA ligase"/>
    <property type="match status" value="1"/>
</dbReference>
<dbReference type="FunFam" id="1.10.730.10:FF:000011">
    <property type="entry name" value="Leucine--tRNA ligase chloroplastic/mitochondrial"/>
    <property type="match status" value="1"/>
</dbReference>
<dbReference type="Gene3D" id="3.40.50.620">
    <property type="entry name" value="HUPs"/>
    <property type="match status" value="3"/>
</dbReference>
<dbReference type="Gene3D" id="1.10.730.10">
    <property type="entry name" value="Isoleucyl-tRNA Synthetase, Domain 1"/>
    <property type="match status" value="1"/>
</dbReference>
<dbReference type="HAMAP" id="MF_00049_B">
    <property type="entry name" value="Leu_tRNA_synth_B"/>
    <property type="match status" value="1"/>
</dbReference>
<dbReference type="InterPro" id="IPR001412">
    <property type="entry name" value="aa-tRNA-synth_I_CS"/>
</dbReference>
<dbReference type="InterPro" id="IPR002302">
    <property type="entry name" value="Leu-tRNA-ligase"/>
</dbReference>
<dbReference type="InterPro" id="IPR025709">
    <property type="entry name" value="Leu_tRNA-synth_edit"/>
</dbReference>
<dbReference type="InterPro" id="IPR013155">
    <property type="entry name" value="M/V/L/I-tRNA-synth_anticd-bd"/>
</dbReference>
<dbReference type="InterPro" id="IPR015413">
    <property type="entry name" value="Methionyl/Leucyl_tRNA_Synth"/>
</dbReference>
<dbReference type="InterPro" id="IPR014729">
    <property type="entry name" value="Rossmann-like_a/b/a_fold"/>
</dbReference>
<dbReference type="InterPro" id="IPR009080">
    <property type="entry name" value="tRNAsynth_Ia_anticodon-bd"/>
</dbReference>
<dbReference type="InterPro" id="IPR009008">
    <property type="entry name" value="Val/Leu/Ile-tRNA-synth_edit"/>
</dbReference>
<dbReference type="NCBIfam" id="TIGR00396">
    <property type="entry name" value="leuS_bact"/>
    <property type="match status" value="1"/>
</dbReference>
<dbReference type="PANTHER" id="PTHR43740:SF2">
    <property type="entry name" value="LEUCINE--TRNA LIGASE, MITOCHONDRIAL"/>
    <property type="match status" value="1"/>
</dbReference>
<dbReference type="PANTHER" id="PTHR43740">
    <property type="entry name" value="LEUCYL-TRNA SYNTHETASE"/>
    <property type="match status" value="1"/>
</dbReference>
<dbReference type="Pfam" id="PF08264">
    <property type="entry name" value="Anticodon_1"/>
    <property type="match status" value="1"/>
</dbReference>
<dbReference type="Pfam" id="PF13603">
    <property type="entry name" value="tRNA-synt_1_2"/>
    <property type="match status" value="1"/>
</dbReference>
<dbReference type="Pfam" id="PF09334">
    <property type="entry name" value="tRNA-synt_1g"/>
    <property type="match status" value="1"/>
</dbReference>
<dbReference type="PRINTS" id="PR00985">
    <property type="entry name" value="TRNASYNTHLEU"/>
</dbReference>
<dbReference type="SUPFAM" id="SSF47323">
    <property type="entry name" value="Anticodon-binding domain of a subclass of class I aminoacyl-tRNA synthetases"/>
    <property type="match status" value="1"/>
</dbReference>
<dbReference type="SUPFAM" id="SSF52374">
    <property type="entry name" value="Nucleotidylyl transferase"/>
    <property type="match status" value="1"/>
</dbReference>
<dbReference type="SUPFAM" id="SSF50677">
    <property type="entry name" value="ValRS/IleRS/LeuRS editing domain"/>
    <property type="match status" value="1"/>
</dbReference>
<dbReference type="PROSITE" id="PS00178">
    <property type="entry name" value="AA_TRNA_LIGASE_I"/>
    <property type="match status" value="1"/>
</dbReference>
<proteinExistence type="inferred from homology"/>
<reference key="1">
    <citation type="journal article" date="2007" name="Microbiology">
        <title>Comparative analysis of the Corynebacterium glutamicum group and complete genome sequence of strain R.</title>
        <authorList>
            <person name="Yukawa H."/>
            <person name="Omumasaba C.A."/>
            <person name="Nonaka H."/>
            <person name="Kos P."/>
            <person name="Okai N."/>
            <person name="Suzuki N."/>
            <person name="Suda M."/>
            <person name="Tsuge Y."/>
            <person name="Watanabe J."/>
            <person name="Ikeda Y."/>
            <person name="Vertes A.A."/>
            <person name="Inui M."/>
        </authorList>
    </citation>
    <scope>NUCLEOTIDE SEQUENCE [LARGE SCALE GENOMIC DNA]</scope>
    <source>
        <strain>R</strain>
    </source>
</reference>
<accession>A4QI59</accession>
<keyword id="KW-0030">Aminoacyl-tRNA synthetase</keyword>
<keyword id="KW-0067">ATP-binding</keyword>
<keyword id="KW-0963">Cytoplasm</keyword>
<keyword id="KW-0436">Ligase</keyword>
<keyword id="KW-0547">Nucleotide-binding</keyword>
<keyword id="KW-0648">Protein biosynthesis</keyword>
<feature type="chain" id="PRO_1000009333" description="Leucine--tRNA ligase">
    <location>
        <begin position="1"/>
        <end position="952"/>
    </location>
</feature>
<feature type="short sequence motif" description="'HIGH' region">
    <location>
        <begin position="66"/>
        <end position="77"/>
    </location>
</feature>
<feature type="short sequence motif" description="'KMSKS' region">
    <location>
        <begin position="722"/>
        <end position="726"/>
    </location>
</feature>
<feature type="binding site" evidence="1">
    <location>
        <position position="725"/>
    </location>
    <ligand>
        <name>ATP</name>
        <dbReference type="ChEBI" id="CHEBI:30616"/>
    </ligand>
</feature>
<name>SYL_CORGB</name>